<keyword id="KW-0134">Cell wall</keyword>
<keyword id="KW-0961">Cell wall biogenesis/degradation</keyword>
<keyword id="KW-0472">Membrane</keyword>
<keyword id="KW-1185">Reference proteome</keyword>
<keyword id="KW-0964">Secreted</keyword>
<keyword id="KW-0732">Signal</keyword>
<comment type="function">
    <text evidence="1">May cause loosening and extension of plant cell walls by disrupting non-covalent bonding between cellulose microfibrils and matrix glucans. No enzymatic activity has been found. May be required for rapid internodal elongation in deepwater rice during submergence (By similarity).</text>
</comment>
<comment type="subcellular location">
    <subcellularLocation>
        <location evidence="1">Secreted</location>
        <location evidence="1">Cell wall</location>
    </subcellularLocation>
    <subcellularLocation>
        <location evidence="1">Membrane</location>
        <topology evidence="1">Peripheral membrane protein</topology>
    </subcellularLocation>
</comment>
<comment type="similarity">
    <text evidence="5">Belongs to the expansin family. Expansin A subfamily.</text>
</comment>
<comment type="sequence caution" evidence="5">
    <conflict type="erroneous initiation">
        <sequence resource="EMBL-CDS" id="AAR01766"/>
    </conflict>
</comment>
<comment type="online information" name="EXPANSIN homepage">
    <link uri="https://www.dept.psu.edu/biology/groups/expansins/index.htm"/>
</comment>
<feature type="signal peptide" evidence="2">
    <location>
        <begin position="1"/>
        <end position="26"/>
    </location>
</feature>
<feature type="chain" id="PRO_0000252010" description="Expansin-A31">
    <location>
        <begin position="27"/>
        <end position="256"/>
    </location>
</feature>
<feature type="domain" description="Expansin-like EG45" evidence="4">
    <location>
        <begin position="46"/>
        <end position="161"/>
    </location>
</feature>
<feature type="domain" description="Expansin-like CBD" evidence="3">
    <location>
        <begin position="171"/>
        <end position="250"/>
    </location>
</feature>
<evidence type="ECO:0000250" key="1"/>
<evidence type="ECO:0000255" key="2"/>
<evidence type="ECO:0000255" key="3">
    <source>
        <dbReference type="PROSITE-ProRule" id="PRU00078"/>
    </source>
</evidence>
<evidence type="ECO:0000255" key="4">
    <source>
        <dbReference type="PROSITE-ProRule" id="PRU00079"/>
    </source>
</evidence>
<evidence type="ECO:0000305" key="5"/>
<reference key="1">
    <citation type="journal article" date="2005" name="Genome Res.">
        <title>Sequence, annotation, and analysis of synteny between rice chromosome 3 and diverged grass species.</title>
        <authorList>
            <consortium name="The rice chromosome 3 sequencing consortium"/>
            <person name="Buell C.R."/>
            <person name="Yuan Q."/>
            <person name="Ouyang S."/>
            <person name="Liu J."/>
            <person name="Zhu W."/>
            <person name="Wang A."/>
            <person name="Maiti R."/>
            <person name="Haas B."/>
            <person name="Wortman J."/>
            <person name="Pertea M."/>
            <person name="Jones K.M."/>
            <person name="Kim M."/>
            <person name="Overton L."/>
            <person name="Tsitrin T."/>
            <person name="Fadrosh D."/>
            <person name="Bera J."/>
            <person name="Weaver B."/>
            <person name="Jin S."/>
            <person name="Johri S."/>
            <person name="Reardon M."/>
            <person name="Webb K."/>
            <person name="Hill J."/>
            <person name="Moffat K."/>
            <person name="Tallon L."/>
            <person name="Van Aken S."/>
            <person name="Lewis M."/>
            <person name="Utterback T."/>
            <person name="Feldblyum T."/>
            <person name="Zismann V."/>
            <person name="Iobst S."/>
            <person name="Hsiao J."/>
            <person name="de Vazeille A.R."/>
            <person name="Salzberg S.L."/>
            <person name="White O."/>
            <person name="Fraser C.M."/>
            <person name="Yu Y."/>
            <person name="Kim H."/>
            <person name="Rambo T."/>
            <person name="Currie J."/>
            <person name="Collura K."/>
            <person name="Kernodle-Thompson S."/>
            <person name="Wei F."/>
            <person name="Kudrna K."/>
            <person name="Ammiraju J.S.S."/>
            <person name="Luo M."/>
            <person name="Goicoechea J.L."/>
            <person name="Wing R.A."/>
            <person name="Henry D."/>
            <person name="Oates R."/>
            <person name="Palmer M."/>
            <person name="Pries G."/>
            <person name="Saski C."/>
            <person name="Simmons J."/>
            <person name="Soderlund C."/>
            <person name="Nelson W."/>
            <person name="de la Bastide M."/>
            <person name="Spiegel L."/>
            <person name="Nascimento L."/>
            <person name="Huang E."/>
            <person name="Preston R."/>
            <person name="Zutavern T."/>
            <person name="Palmer L."/>
            <person name="O'Shaughnessy A."/>
            <person name="Dike S."/>
            <person name="McCombie W.R."/>
            <person name="Minx P."/>
            <person name="Cordum H."/>
            <person name="Wilson R."/>
            <person name="Jin W."/>
            <person name="Lee H.R."/>
            <person name="Jiang J."/>
            <person name="Jackson S."/>
        </authorList>
    </citation>
    <scope>NUCLEOTIDE SEQUENCE [LARGE SCALE GENOMIC DNA]</scope>
    <source>
        <strain>cv. Nipponbare</strain>
    </source>
</reference>
<reference key="2">
    <citation type="journal article" date="2005" name="Nature">
        <title>The map-based sequence of the rice genome.</title>
        <authorList>
            <consortium name="International rice genome sequencing project (IRGSP)"/>
        </authorList>
    </citation>
    <scope>NUCLEOTIDE SEQUENCE [LARGE SCALE GENOMIC DNA]</scope>
    <source>
        <strain>cv. Nipponbare</strain>
    </source>
</reference>
<reference key="3">
    <citation type="journal article" date="2013" name="Rice">
        <title>Improvement of the Oryza sativa Nipponbare reference genome using next generation sequence and optical map data.</title>
        <authorList>
            <person name="Kawahara Y."/>
            <person name="de la Bastide M."/>
            <person name="Hamilton J.P."/>
            <person name="Kanamori H."/>
            <person name="McCombie W.R."/>
            <person name="Ouyang S."/>
            <person name="Schwartz D.C."/>
            <person name="Tanaka T."/>
            <person name="Wu J."/>
            <person name="Zhou S."/>
            <person name="Childs K.L."/>
            <person name="Davidson R.M."/>
            <person name="Lin H."/>
            <person name="Quesada-Ocampo L."/>
            <person name="Vaillancourt B."/>
            <person name="Sakai H."/>
            <person name="Lee S.S."/>
            <person name="Kim J."/>
            <person name="Numa H."/>
            <person name="Itoh T."/>
            <person name="Buell C.R."/>
            <person name="Matsumoto T."/>
        </authorList>
    </citation>
    <scope>GENOME REANNOTATION</scope>
    <source>
        <strain>cv. Nipponbare</strain>
    </source>
</reference>
<reference key="4">
    <citation type="journal article" date="2003" name="Science">
        <title>Collection, mapping, and annotation of over 28,000 cDNA clones from japonica rice.</title>
        <authorList>
            <consortium name="The rice full-length cDNA consortium"/>
        </authorList>
    </citation>
    <scope>NUCLEOTIDE SEQUENCE [LARGE SCALE MRNA]</scope>
    <source>
        <strain>cv. Nipponbare</strain>
    </source>
</reference>
<reference key="5">
    <citation type="journal article" date="2004" name="Plant Mol. Biol.">
        <title>Nomenclature for members of the expansin superfamily of genes and proteins.</title>
        <authorList>
            <person name="Kende H."/>
            <person name="Bradford K.J."/>
            <person name="Brummell D.A."/>
            <person name="Cho H.-T."/>
            <person name="Cosgrove D.J."/>
            <person name="Fleming A.J."/>
            <person name="Gehring C."/>
            <person name="Lee Y."/>
            <person name="McQueen-Mason S.J."/>
            <person name="Rose J.K.C."/>
            <person name="Voesenek L.A.C."/>
        </authorList>
    </citation>
    <scope>NOMENCLATURE</scope>
</reference>
<sequence>MDMAMSSRLALCLAVVAACAAGGAVADWSPATATFYGGSDGSGTMGGACGYGNLYDQGYGVDNAALSQALFNDGASCGQCYLIVCDTSRAPQWCKAGTAVTVTATNLCPPNWALPSDGGGWCNPPRPHFDMSQPAWEQIGVYQAGIVPVLYQRVRCWRQGGVRFTVAGLNYFELVLITNVAGSGSVASAWIKGTNTGWIQMSRNWGANWQSLAGLAGQALSFAVTTTGGQYLQFQDVAPAWWQFGQTFSTYQQFDY</sequence>
<name>EXP31_ORYSJ</name>
<dbReference type="EMBL" id="AC133398">
    <property type="protein sequence ID" value="AAR01766.1"/>
    <property type="status" value="ALT_INIT"/>
    <property type="molecule type" value="Genomic_DNA"/>
</dbReference>
<dbReference type="EMBL" id="DP000009">
    <property type="protein sequence ID" value="ABF96741.1"/>
    <property type="molecule type" value="Genomic_DNA"/>
</dbReference>
<dbReference type="EMBL" id="AP014959">
    <property type="protein sequence ID" value="BAS84800.1"/>
    <property type="molecule type" value="Genomic_DNA"/>
</dbReference>
<dbReference type="EMBL" id="AK111273">
    <property type="protein sequence ID" value="BAG99194.1"/>
    <property type="molecule type" value="mRNA"/>
</dbReference>
<dbReference type="RefSeq" id="XP_015629916.1">
    <property type="nucleotide sequence ID" value="XM_015774430.1"/>
</dbReference>
<dbReference type="SMR" id="Q75I75"/>
<dbReference type="FunCoup" id="Q75I75">
    <property type="interactions" value="12"/>
</dbReference>
<dbReference type="STRING" id="39947.Q75I75"/>
<dbReference type="PaxDb" id="39947-Q75I75"/>
<dbReference type="EnsemblPlants" id="Os03t0428700-01">
    <property type="protein sequence ID" value="Os03t0428700-01"/>
    <property type="gene ID" value="Os03g0428700"/>
</dbReference>
<dbReference type="Gramene" id="Os03t0428700-01">
    <property type="protein sequence ID" value="Os03t0428700-01"/>
    <property type="gene ID" value="Os03g0428700"/>
</dbReference>
<dbReference type="eggNOG" id="ENOG502QVVV">
    <property type="taxonomic scope" value="Eukaryota"/>
</dbReference>
<dbReference type="HOGENOM" id="CLU_027462_0_3_1"/>
<dbReference type="InParanoid" id="Q75I75"/>
<dbReference type="OMA" id="ANWQCLS"/>
<dbReference type="OrthoDB" id="636220at2759"/>
<dbReference type="Proteomes" id="UP000000763">
    <property type="component" value="Chromosome 3"/>
</dbReference>
<dbReference type="Proteomes" id="UP000059680">
    <property type="component" value="Chromosome 3"/>
</dbReference>
<dbReference type="GO" id="GO:0005576">
    <property type="term" value="C:extracellular region"/>
    <property type="evidence" value="ECO:0007669"/>
    <property type="project" value="UniProtKB-KW"/>
</dbReference>
<dbReference type="GO" id="GO:0016020">
    <property type="term" value="C:membrane"/>
    <property type="evidence" value="ECO:0007669"/>
    <property type="project" value="UniProtKB-SubCell"/>
</dbReference>
<dbReference type="GO" id="GO:0009828">
    <property type="term" value="P:plant-type cell wall loosening"/>
    <property type="evidence" value="ECO:0000250"/>
    <property type="project" value="UniProtKB"/>
</dbReference>
<dbReference type="CDD" id="cd22274">
    <property type="entry name" value="DPBB_EXPA_N"/>
    <property type="match status" value="1"/>
</dbReference>
<dbReference type="Gene3D" id="2.60.40.760">
    <property type="entry name" value="Expansin, cellulose-binding-like domain"/>
    <property type="match status" value="1"/>
</dbReference>
<dbReference type="Gene3D" id="2.40.40.10">
    <property type="entry name" value="RlpA-like domain"/>
    <property type="match status" value="1"/>
</dbReference>
<dbReference type="InterPro" id="IPR007118">
    <property type="entry name" value="Expan_Lol_pI"/>
</dbReference>
<dbReference type="InterPro" id="IPR002963">
    <property type="entry name" value="Expansin"/>
</dbReference>
<dbReference type="InterPro" id="IPR007112">
    <property type="entry name" value="Expansin/allergen_DPBB_dom"/>
</dbReference>
<dbReference type="InterPro" id="IPR007117">
    <property type="entry name" value="Expansin_CBD"/>
</dbReference>
<dbReference type="InterPro" id="IPR036749">
    <property type="entry name" value="Expansin_CBD_sf"/>
</dbReference>
<dbReference type="InterPro" id="IPR009009">
    <property type="entry name" value="RlpA-like_DPBB"/>
</dbReference>
<dbReference type="InterPro" id="IPR036908">
    <property type="entry name" value="RlpA-like_sf"/>
</dbReference>
<dbReference type="PANTHER" id="PTHR31867">
    <property type="entry name" value="EXPANSIN-A15"/>
    <property type="match status" value="1"/>
</dbReference>
<dbReference type="Pfam" id="PF03330">
    <property type="entry name" value="DPBB_1"/>
    <property type="match status" value="1"/>
</dbReference>
<dbReference type="Pfam" id="PF01357">
    <property type="entry name" value="Expansin_C"/>
    <property type="match status" value="1"/>
</dbReference>
<dbReference type="PRINTS" id="PR01226">
    <property type="entry name" value="EXPANSIN"/>
</dbReference>
<dbReference type="PRINTS" id="PR01225">
    <property type="entry name" value="EXPANSNFAMLY"/>
</dbReference>
<dbReference type="SMART" id="SM00837">
    <property type="entry name" value="DPBB_1"/>
    <property type="match status" value="1"/>
</dbReference>
<dbReference type="SUPFAM" id="SSF50685">
    <property type="entry name" value="Barwin-like endoglucanases"/>
    <property type="match status" value="1"/>
</dbReference>
<dbReference type="SUPFAM" id="SSF49590">
    <property type="entry name" value="PHL pollen allergen"/>
    <property type="match status" value="1"/>
</dbReference>
<dbReference type="PROSITE" id="PS50843">
    <property type="entry name" value="EXPANSIN_CBD"/>
    <property type="match status" value="1"/>
</dbReference>
<dbReference type="PROSITE" id="PS50842">
    <property type="entry name" value="EXPANSIN_EG45"/>
    <property type="match status" value="1"/>
</dbReference>
<organism>
    <name type="scientific">Oryza sativa subsp. japonica</name>
    <name type="common">Rice</name>
    <dbReference type="NCBI Taxonomy" id="39947"/>
    <lineage>
        <taxon>Eukaryota</taxon>
        <taxon>Viridiplantae</taxon>
        <taxon>Streptophyta</taxon>
        <taxon>Embryophyta</taxon>
        <taxon>Tracheophyta</taxon>
        <taxon>Spermatophyta</taxon>
        <taxon>Magnoliopsida</taxon>
        <taxon>Liliopsida</taxon>
        <taxon>Poales</taxon>
        <taxon>Poaceae</taxon>
        <taxon>BOP clade</taxon>
        <taxon>Oryzoideae</taxon>
        <taxon>Oryzeae</taxon>
        <taxon>Oryzinae</taxon>
        <taxon>Oryza</taxon>
        <taxon>Oryza sativa</taxon>
    </lineage>
</organism>
<proteinExistence type="evidence at transcript level"/>
<gene>
    <name type="primary">EXPA31</name>
    <name type="synonym">EXP31</name>
    <name type="ordered locus">Os03g0428700</name>
    <name type="ordered locus">LOC_Os03g31480</name>
    <name type="ORF">OSJNBa0083F15.7</name>
</gene>
<accession>Q75I75</accession>
<accession>B7F3J7</accession>
<accession>Q10J97</accession>
<protein>
    <recommendedName>
        <fullName>Expansin-A31</fullName>
    </recommendedName>
    <alternativeName>
        <fullName>Alpha-expansin-31</fullName>
    </alternativeName>
    <alternativeName>
        <fullName>OsEXP31</fullName>
    </alternativeName>
    <alternativeName>
        <fullName>OsEXPA31</fullName>
    </alternativeName>
    <alternativeName>
        <fullName>OsaEXPa1.5</fullName>
    </alternativeName>
</protein>